<sequence length="266" mass="29992">MRKNTYAMRYVAGQPAERILPPGSFASIGQALPPGEPLSTEERIRILVWNIYKQQRAEWLSVLKNYGKDAHLVLLQEAQTTPELVQFATANYLAADQVPAFVLPQHPSGVMTLSAAHPVYCCPLREREPILRLAKSALVTVYPLPDTRLLMVVNIHAVNFSLGVDVYSKQLLPIGDQIAHHSGPVIMAGDFNAWSRRRMNALYRFAREMSLRQVRFTDDQRRRAFGRPLDFVFYRGLNVSEASVLVTRASDHNPLLVEFSPGKPDK</sequence>
<feature type="chain" id="PRO_0000074643" description="UPF0294 protein YafD">
    <location>
        <begin position="1"/>
        <end position="266"/>
    </location>
</feature>
<protein>
    <recommendedName>
        <fullName>UPF0294 protein YafD</fullName>
    </recommendedName>
</protein>
<keyword id="KW-0963">Cytoplasm</keyword>
<keyword id="KW-1185">Reference proteome</keyword>
<dbReference type="EMBL" id="AE005674">
    <property type="protein sequence ID" value="AAN41857.1"/>
    <property type="molecule type" value="Genomic_DNA"/>
</dbReference>
<dbReference type="EMBL" id="AE014073">
    <property type="protein sequence ID" value="AAP15737.1"/>
    <property type="molecule type" value="Genomic_DNA"/>
</dbReference>
<dbReference type="RefSeq" id="NP_706150.1">
    <property type="nucleotide sequence ID" value="NC_004337.2"/>
</dbReference>
<dbReference type="RefSeq" id="WP_001230983.1">
    <property type="nucleotide sequence ID" value="NZ_WPGW01000097.1"/>
</dbReference>
<dbReference type="SMR" id="P0A8U5"/>
<dbReference type="STRING" id="198214.SF0195"/>
<dbReference type="PaxDb" id="198214-SF0195"/>
<dbReference type="GeneID" id="1024437"/>
<dbReference type="KEGG" id="sfl:SF0195"/>
<dbReference type="KEGG" id="sfx:S0203"/>
<dbReference type="PATRIC" id="fig|198214.7.peg.218"/>
<dbReference type="HOGENOM" id="CLU_083563_0_0_6"/>
<dbReference type="Proteomes" id="UP000001006">
    <property type="component" value="Chromosome"/>
</dbReference>
<dbReference type="Proteomes" id="UP000002673">
    <property type="component" value="Chromosome"/>
</dbReference>
<dbReference type="GO" id="GO:0005737">
    <property type="term" value="C:cytoplasm"/>
    <property type="evidence" value="ECO:0007669"/>
    <property type="project" value="UniProtKB-SubCell"/>
</dbReference>
<dbReference type="GO" id="GO:0003824">
    <property type="term" value="F:catalytic activity"/>
    <property type="evidence" value="ECO:0007669"/>
    <property type="project" value="InterPro"/>
</dbReference>
<dbReference type="Gene3D" id="3.60.10.10">
    <property type="entry name" value="Endonuclease/exonuclease/phosphatase"/>
    <property type="match status" value="1"/>
</dbReference>
<dbReference type="HAMAP" id="MF_01119">
    <property type="entry name" value="UPF0294"/>
    <property type="match status" value="1"/>
</dbReference>
<dbReference type="InterPro" id="IPR036691">
    <property type="entry name" value="Endo/exonu/phosph_ase_sf"/>
</dbReference>
<dbReference type="InterPro" id="IPR005135">
    <property type="entry name" value="Endo/exonuclease/phosphatase"/>
</dbReference>
<dbReference type="InterPro" id="IPR022958">
    <property type="entry name" value="UPF0294"/>
</dbReference>
<dbReference type="NCBIfam" id="NF003839">
    <property type="entry name" value="PRK05421.1-1"/>
    <property type="match status" value="1"/>
</dbReference>
<dbReference type="NCBIfam" id="NF003840">
    <property type="entry name" value="PRK05421.1-2"/>
    <property type="match status" value="1"/>
</dbReference>
<dbReference type="NCBIfam" id="NF003841">
    <property type="entry name" value="PRK05421.1-3"/>
    <property type="match status" value="1"/>
</dbReference>
<dbReference type="NCBIfam" id="NF003842">
    <property type="entry name" value="PRK05421.1-4"/>
    <property type="match status" value="1"/>
</dbReference>
<dbReference type="Pfam" id="PF03372">
    <property type="entry name" value="Exo_endo_phos"/>
    <property type="match status" value="1"/>
</dbReference>
<dbReference type="SUPFAM" id="SSF56219">
    <property type="entry name" value="DNase I-like"/>
    <property type="match status" value="1"/>
</dbReference>
<organism>
    <name type="scientific">Shigella flexneri</name>
    <dbReference type="NCBI Taxonomy" id="623"/>
    <lineage>
        <taxon>Bacteria</taxon>
        <taxon>Pseudomonadati</taxon>
        <taxon>Pseudomonadota</taxon>
        <taxon>Gammaproteobacteria</taxon>
        <taxon>Enterobacterales</taxon>
        <taxon>Enterobacteriaceae</taxon>
        <taxon>Shigella</taxon>
    </lineage>
</organism>
<reference key="1">
    <citation type="journal article" date="2002" name="Nucleic Acids Res.">
        <title>Genome sequence of Shigella flexneri 2a: insights into pathogenicity through comparison with genomes of Escherichia coli K12 and O157.</title>
        <authorList>
            <person name="Jin Q."/>
            <person name="Yuan Z."/>
            <person name="Xu J."/>
            <person name="Wang Y."/>
            <person name="Shen Y."/>
            <person name="Lu W."/>
            <person name="Wang J."/>
            <person name="Liu H."/>
            <person name="Yang J."/>
            <person name="Yang F."/>
            <person name="Zhang X."/>
            <person name="Zhang J."/>
            <person name="Yang G."/>
            <person name="Wu H."/>
            <person name="Qu D."/>
            <person name="Dong J."/>
            <person name="Sun L."/>
            <person name="Xue Y."/>
            <person name="Zhao A."/>
            <person name="Gao Y."/>
            <person name="Zhu J."/>
            <person name="Kan B."/>
            <person name="Ding K."/>
            <person name="Chen S."/>
            <person name="Cheng H."/>
            <person name="Yao Z."/>
            <person name="He B."/>
            <person name="Chen R."/>
            <person name="Ma D."/>
            <person name="Qiang B."/>
            <person name="Wen Y."/>
            <person name="Hou Y."/>
            <person name="Yu J."/>
        </authorList>
    </citation>
    <scope>NUCLEOTIDE SEQUENCE [LARGE SCALE GENOMIC DNA]</scope>
    <source>
        <strain>301 / Serotype 2a</strain>
    </source>
</reference>
<reference key="2">
    <citation type="journal article" date="2003" name="Infect. Immun.">
        <title>Complete genome sequence and comparative genomics of Shigella flexneri serotype 2a strain 2457T.</title>
        <authorList>
            <person name="Wei J."/>
            <person name="Goldberg M.B."/>
            <person name="Burland V."/>
            <person name="Venkatesan M.M."/>
            <person name="Deng W."/>
            <person name="Fournier G."/>
            <person name="Mayhew G.F."/>
            <person name="Plunkett G. III"/>
            <person name="Rose D.J."/>
            <person name="Darling A."/>
            <person name="Mau B."/>
            <person name="Perna N.T."/>
            <person name="Payne S.M."/>
            <person name="Runyen-Janecky L.J."/>
            <person name="Zhou S."/>
            <person name="Schwartz D.C."/>
            <person name="Blattner F.R."/>
        </authorList>
    </citation>
    <scope>NUCLEOTIDE SEQUENCE [LARGE SCALE GENOMIC DNA]</scope>
    <source>
        <strain>ATCC 700930 / 2457T / Serotype 2a</strain>
    </source>
</reference>
<name>YAFD_SHIFL</name>
<accession>P0A8U5</accession>
<accession>P30865</accession>
<accession>P75671</accession>
<gene>
    <name type="primary">yafD</name>
    <name type="ordered locus">SF0195</name>
    <name type="ordered locus">S0203</name>
</gene>
<comment type="subcellular location">
    <subcellularLocation>
        <location evidence="1">Cytoplasm</location>
    </subcellularLocation>
</comment>
<comment type="similarity">
    <text evidence="1">Belongs to the UPF0294 family.</text>
</comment>
<proteinExistence type="inferred from homology"/>
<evidence type="ECO:0000305" key="1"/>